<gene>
    <name type="ordered locus">CMM_1366</name>
</gene>
<protein>
    <recommendedName>
        <fullName evidence="1">Putative glutamate--cysteine ligase 2</fullName>
        <ecNumber evidence="1">6.3.2.2</ecNumber>
    </recommendedName>
    <alternativeName>
        <fullName evidence="1">Gamma-glutamylcysteine synthetase 2</fullName>
        <shortName evidence="1">GCS 2</shortName>
        <shortName evidence="1">Gamma-GCS 2</shortName>
    </alternativeName>
</protein>
<name>GCS2_CLAM3</name>
<feature type="chain" id="PRO_0000337697" description="Putative glutamate--cysteine ligase 2">
    <location>
        <begin position="1"/>
        <end position="383"/>
    </location>
</feature>
<sequence length="383" mass="42309">MDGRTRMQIDFAHQPPSRVGIEWELACVDRGSGELAGVAPEILRSFPHDDAHPHVTGEFLTNTVEVVSAPHSRVGHAVDDLARLIERVVDVADPLGIDLMCAGTHPFSAWPDQDVTPDNERYATLLDRTRWWGRQMMIWGVHVHVGIDDASKALPILNALLVHLPRFQALSASSPFWSGQETGYASNRALMFQQLPTAGLPPDLTTWADYERLVGDMTHVGVIDHHSELRWDIRPAPKWGTLETRVFDGVSTLGEIASLAALVQCLVHDMSAALDRGEELPRMQPWFVRENKWRAARYGMDAIIIQDAAGDEALVGDDTRALVERLSPTADALGCEAELRGILDIVDRGASYQRQLRVAEENDGALAPVVTHLVEELRSGLGR</sequence>
<comment type="function">
    <text evidence="1">ATP-dependent carboxylate-amine ligase which exhibits weak glutamate--cysteine ligase activity.</text>
</comment>
<comment type="catalytic activity">
    <reaction evidence="1">
        <text>L-cysteine + L-glutamate + ATP = gamma-L-glutamyl-L-cysteine + ADP + phosphate + H(+)</text>
        <dbReference type="Rhea" id="RHEA:13285"/>
        <dbReference type="ChEBI" id="CHEBI:15378"/>
        <dbReference type="ChEBI" id="CHEBI:29985"/>
        <dbReference type="ChEBI" id="CHEBI:30616"/>
        <dbReference type="ChEBI" id="CHEBI:35235"/>
        <dbReference type="ChEBI" id="CHEBI:43474"/>
        <dbReference type="ChEBI" id="CHEBI:58173"/>
        <dbReference type="ChEBI" id="CHEBI:456216"/>
        <dbReference type="EC" id="6.3.2.2"/>
    </reaction>
</comment>
<comment type="similarity">
    <text evidence="1">Belongs to the glutamate--cysteine ligase type 2 family. YbdK subfamily.</text>
</comment>
<accession>A5CQQ7</accession>
<organism>
    <name type="scientific">Clavibacter michiganensis subsp. michiganensis (strain NCPPB 382)</name>
    <dbReference type="NCBI Taxonomy" id="443906"/>
    <lineage>
        <taxon>Bacteria</taxon>
        <taxon>Bacillati</taxon>
        <taxon>Actinomycetota</taxon>
        <taxon>Actinomycetes</taxon>
        <taxon>Micrococcales</taxon>
        <taxon>Microbacteriaceae</taxon>
        <taxon>Clavibacter</taxon>
    </lineage>
</organism>
<reference key="1">
    <citation type="journal article" date="2008" name="J. Bacteriol.">
        <title>The genome sequence of the tomato-pathogenic actinomycete Clavibacter michiganensis subsp. michiganensis NCPPB382 reveals a large island involved in pathogenicity.</title>
        <authorList>
            <person name="Gartemann K.-H."/>
            <person name="Abt B."/>
            <person name="Bekel T."/>
            <person name="Burger A."/>
            <person name="Engemann J."/>
            <person name="Fluegel M."/>
            <person name="Gaigalat L."/>
            <person name="Goesmann A."/>
            <person name="Graefen I."/>
            <person name="Kalinowski J."/>
            <person name="Kaup O."/>
            <person name="Kirchner O."/>
            <person name="Krause L."/>
            <person name="Linke B."/>
            <person name="McHardy A."/>
            <person name="Meyer F."/>
            <person name="Pohle S."/>
            <person name="Rueckert C."/>
            <person name="Schneiker S."/>
            <person name="Zellermann E.-M."/>
            <person name="Puehler A."/>
            <person name="Eichenlaub R."/>
            <person name="Kaiser O."/>
            <person name="Bartels D."/>
        </authorList>
    </citation>
    <scope>NUCLEOTIDE SEQUENCE [LARGE SCALE GENOMIC DNA]</scope>
    <source>
        <strain>NCPPB 382</strain>
    </source>
</reference>
<dbReference type="EC" id="6.3.2.2" evidence="1"/>
<dbReference type="EMBL" id="AM711867">
    <property type="protein sequence ID" value="CAN01411.1"/>
    <property type="molecule type" value="Genomic_DNA"/>
</dbReference>
<dbReference type="SMR" id="A5CQQ7"/>
<dbReference type="KEGG" id="cmi:CMM_1366"/>
<dbReference type="eggNOG" id="COG2170">
    <property type="taxonomic scope" value="Bacteria"/>
</dbReference>
<dbReference type="HOGENOM" id="CLU_044848_1_0_11"/>
<dbReference type="OrthoDB" id="9769628at2"/>
<dbReference type="Proteomes" id="UP000001564">
    <property type="component" value="Chromosome"/>
</dbReference>
<dbReference type="GO" id="GO:0005524">
    <property type="term" value="F:ATP binding"/>
    <property type="evidence" value="ECO:0007669"/>
    <property type="project" value="UniProtKB-KW"/>
</dbReference>
<dbReference type="GO" id="GO:0004357">
    <property type="term" value="F:glutamate-cysteine ligase activity"/>
    <property type="evidence" value="ECO:0007669"/>
    <property type="project" value="UniProtKB-EC"/>
</dbReference>
<dbReference type="GO" id="GO:0042398">
    <property type="term" value="P:modified amino acid biosynthetic process"/>
    <property type="evidence" value="ECO:0007669"/>
    <property type="project" value="InterPro"/>
</dbReference>
<dbReference type="Gene3D" id="3.30.590.20">
    <property type="match status" value="1"/>
</dbReference>
<dbReference type="HAMAP" id="MF_01609">
    <property type="entry name" value="Glu_cys_ligase_2"/>
    <property type="match status" value="1"/>
</dbReference>
<dbReference type="InterPro" id="IPR050141">
    <property type="entry name" value="GCL_type2/YbdK_subfam"/>
</dbReference>
<dbReference type="InterPro" id="IPR006336">
    <property type="entry name" value="GCS2"/>
</dbReference>
<dbReference type="InterPro" id="IPR014746">
    <property type="entry name" value="Gln_synth/guanido_kin_cat_dom"/>
</dbReference>
<dbReference type="InterPro" id="IPR011793">
    <property type="entry name" value="YbdK"/>
</dbReference>
<dbReference type="NCBIfam" id="TIGR02050">
    <property type="entry name" value="gshA_cyan_rel"/>
    <property type="match status" value="1"/>
</dbReference>
<dbReference type="NCBIfam" id="NF010042">
    <property type="entry name" value="PRK13517.1-2"/>
    <property type="match status" value="1"/>
</dbReference>
<dbReference type="NCBIfam" id="NF010043">
    <property type="entry name" value="PRK13517.1-3"/>
    <property type="match status" value="1"/>
</dbReference>
<dbReference type="NCBIfam" id="NF010044">
    <property type="entry name" value="PRK13517.1-4"/>
    <property type="match status" value="1"/>
</dbReference>
<dbReference type="PANTHER" id="PTHR36510">
    <property type="entry name" value="GLUTAMATE--CYSTEINE LIGASE 2-RELATED"/>
    <property type="match status" value="1"/>
</dbReference>
<dbReference type="PANTHER" id="PTHR36510:SF1">
    <property type="entry name" value="GLUTAMATE--CYSTEINE LIGASE 2-RELATED"/>
    <property type="match status" value="1"/>
</dbReference>
<dbReference type="Pfam" id="PF04107">
    <property type="entry name" value="GCS2"/>
    <property type="match status" value="1"/>
</dbReference>
<dbReference type="SUPFAM" id="SSF55931">
    <property type="entry name" value="Glutamine synthetase/guanido kinase"/>
    <property type="match status" value="1"/>
</dbReference>
<keyword id="KW-0067">ATP-binding</keyword>
<keyword id="KW-0436">Ligase</keyword>
<keyword id="KW-0547">Nucleotide-binding</keyword>
<evidence type="ECO:0000255" key="1">
    <source>
        <dbReference type="HAMAP-Rule" id="MF_01609"/>
    </source>
</evidence>
<proteinExistence type="inferred from homology"/>